<gene>
    <name type="primary">ECM14</name>
    <name type="ORF">UREG_00780</name>
</gene>
<feature type="signal peptide" evidence="4">
    <location>
        <begin position="1"/>
        <end position="20"/>
    </location>
</feature>
<feature type="propeptide" id="PRO_0000453254" evidence="3">
    <location>
        <begin position="21"/>
        <end position="174"/>
    </location>
</feature>
<feature type="chain" id="PRO_0000411193" description="Inactive metallocarboxypeptidase ECM14">
    <location>
        <begin position="175"/>
        <end position="584"/>
    </location>
</feature>
<feature type="domain" description="Peptidase M14" evidence="5">
    <location>
        <begin position="202"/>
        <end position="524"/>
    </location>
</feature>
<feature type="region of interest" description="Disordered" evidence="6">
    <location>
        <begin position="564"/>
        <end position="584"/>
    </location>
</feature>
<feature type="binding site" evidence="1">
    <location>
        <begin position="267"/>
        <end position="270"/>
    </location>
    <ligand>
        <name>substrate</name>
    </ligand>
</feature>
<feature type="binding site" evidence="5">
    <location>
        <position position="267"/>
    </location>
    <ligand>
        <name>Zn(2+)</name>
        <dbReference type="ChEBI" id="CHEBI:29105"/>
        <note>catalytic</note>
    </ligand>
</feature>
<feature type="binding site" evidence="5">
    <location>
        <position position="270"/>
    </location>
    <ligand>
        <name>Zn(2+)</name>
        <dbReference type="ChEBI" id="CHEBI:29105"/>
        <note>catalytic</note>
    </ligand>
</feature>
<feature type="binding site" evidence="1">
    <location>
        <position position="325"/>
    </location>
    <ligand>
        <name>substrate</name>
    </ligand>
</feature>
<feature type="binding site" evidence="1">
    <location>
        <begin position="342"/>
        <end position="343"/>
    </location>
    <ligand>
        <name>substrate</name>
    </ligand>
</feature>
<feature type="binding site" evidence="5">
    <location>
        <position position="399"/>
    </location>
    <ligand>
        <name>Zn(2+)</name>
        <dbReference type="ChEBI" id="CHEBI:29105"/>
        <note>catalytic</note>
    </ligand>
</feature>
<feature type="binding site" evidence="1">
    <location>
        <begin position="400"/>
        <end position="401"/>
    </location>
    <ligand>
        <name>substrate</name>
    </ligand>
</feature>
<feature type="glycosylation site" description="N-linked (GlcNAc...) asparagine" evidence="4">
    <location>
        <position position="383"/>
    </location>
</feature>
<feature type="glycosylation site" description="N-linked (GlcNAc...) asparagine" evidence="4">
    <location>
        <position position="389"/>
    </location>
</feature>
<feature type="disulfide bond" evidence="2">
    <location>
        <begin position="336"/>
        <end position="359"/>
    </location>
</feature>
<dbReference type="EMBL" id="CH476615">
    <property type="protein sequence ID" value="EEP75933.1"/>
    <property type="molecule type" value="Genomic_DNA"/>
</dbReference>
<dbReference type="RefSeq" id="XP_002541266.1">
    <property type="nucleotide sequence ID" value="XM_002541220.1"/>
</dbReference>
<dbReference type="SMR" id="C4JEE1"/>
<dbReference type="FunCoup" id="C4JEE1">
    <property type="interactions" value="714"/>
</dbReference>
<dbReference type="STRING" id="336963.C4JEE1"/>
<dbReference type="GlyCosmos" id="C4JEE1">
    <property type="glycosylation" value="2 sites, No reported glycans"/>
</dbReference>
<dbReference type="GeneID" id="8444375"/>
<dbReference type="KEGG" id="ure:UREG_00780"/>
<dbReference type="VEuPathDB" id="FungiDB:UREG_00780"/>
<dbReference type="eggNOG" id="KOG2650">
    <property type="taxonomic scope" value="Eukaryota"/>
</dbReference>
<dbReference type="HOGENOM" id="CLU_019326_1_0_1"/>
<dbReference type="InParanoid" id="C4JEE1"/>
<dbReference type="OMA" id="WFYHQLH"/>
<dbReference type="OrthoDB" id="3626597at2759"/>
<dbReference type="Proteomes" id="UP000002058">
    <property type="component" value="Unassembled WGS sequence"/>
</dbReference>
<dbReference type="GO" id="GO:0005576">
    <property type="term" value="C:extracellular region"/>
    <property type="evidence" value="ECO:0007669"/>
    <property type="project" value="UniProtKB-SubCell"/>
</dbReference>
<dbReference type="GO" id="GO:0005773">
    <property type="term" value="C:vacuole"/>
    <property type="evidence" value="ECO:0007669"/>
    <property type="project" value="UniProtKB-SubCell"/>
</dbReference>
<dbReference type="GO" id="GO:0008270">
    <property type="term" value="F:zinc ion binding"/>
    <property type="evidence" value="ECO:0007669"/>
    <property type="project" value="InterPro"/>
</dbReference>
<dbReference type="GO" id="GO:0071555">
    <property type="term" value="P:cell wall organization"/>
    <property type="evidence" value="ECO:0007669"/>
    <property type="project" value="UniProtKB-KW"/>
</dbReference>
<dbReference type="GO" id="GO:0006508">
    <property type="term" value="P:proteolysis"/>
    <property type="evidence" value="ECO:0007669"/>
    <property type="project" value="InterPro"/>
</dbReference>
<dbReference type="CDD" id="cd03860">
    <property type="entry name" value="M14_CP_A-B_like"/>
    <property type="match status" value="1"/>
</dbReference>
<dbReference type="FunFam" id="3.40.630.10:FF:000060">
    <property type="entry name" value="Putative metallocarboxypeptidase ecm14"/>
    <property type="match status" value="1"/>
</dbReference>
<dbReference type="Gene3D" id="3.40.630.10">
    <property type="entry name" value="Zn peptidases"/>
    <property type="match status" value="1"/>
</dbReference>
<dbReference type="InterPro" id="IPR000834">
    <property type="entry name" value="Peptidase_M14"/>
</dbReference>
<dbReference type="PANTHER" id="PTHR11705:SF147">
    <property type="entry name" value="INACTIVE METALLOCARBOXYPEPTIDASE ECM14"/>
    <property type="match status" value="1"/>
</dbReference>
<dbReference type="PANTHER" id="PTHR11705">
    <property type="entry name" value="PROTEASE FAMILY M14 CARBOXYPEPTIDASE A,B"/>
    <property type="match status" value="1"/>
</dbReference>
<dbReference type="Pfam" id="PF00246">
    <property type="entry name" value="Peptidase_M14"/>
    <property type="match status" value="1"/>
</dbReference>
<dbReference type="PRINTS" id="PR00765">
    <property type="entry name" value="CRBOXYPTASEA"/>
</dbReference>
<dbReference type="SMART" id="SM00631">
    <property type="entry name" value="Zn_pept"/>
    <property type="match status" value="1"/>
</dbReference>
<dbReference type="SUPFAM" id="SSF53187">
    <property type="entry name" value="Zn-dependent exopeptidases"/>
    <property type="match status" value="1"/>
</dbReference>
<dbReference type="PROSITE" id="PS00132">
    <property type="entry name" value="CARBOXYPEPT_ZN_1"/>
    <property type="match status" value="1"/>
</dbReference>
<dbReference type="PROSITE" id="PS52035">
    <property type="entry name" value="PEPTIDASE_M14"/>
    <property type="match status" value="1"/>
</dbReference>
<proteinExistence type="inferred from homology"/>
<comment type="function">
    <text evidence="3">Inactive carboxypeptidase that may play a role in cell wall organization and biogenesis.</text>
</comment>
<comment type="cofactor">
    <cofactor evidence="1">
        <name>Zn(2+)</name>
        <dbReference type="ChEBI" id="CHEBI:29105"/>
    </cofactor>
    <text evidence="1">Binds 1 zinc ion per subunit.</text>
</comment>
<comment type="subcellular location">
    <subcellularLocation>
        <location evidence="3">Vacuole</location>
    </subcellularLocation>
    <subcellularLocation>
        <location evidence="3">Secreted</location>
    </subcellularLocation>
</comment>
<comment type="similarity">
    <text evidence="7">Belongs to the peptidase M14 family.</text>
</comment>
<comment type="caution">
    <text evidence="3">Lacks the conserved Glu residue in position 490 essential for carbopeptidase activity. The mature form lacks catalytic activity towards synthetic peptide substrates.</text>
</comment>
<evidence type="ECO:0000250" key="1">
    <source>
        <dbReference type="UniProtKB" id="P00730"/>
    </source>
</evidence>
<evidence type="ECO:0000250" key="2">
    <source>
        <dbReference type="UniProtKB" id="P15085"/>
    </source>
</evidence>
<evidence type="ECO:0000250" key="3">
    <source>
        <dbReference type="UniProtKB" id="P38836"/>
    </source>
</evidence>
<evidence type="ECO:0000255" key="4"/>
<evidence type="ECO:0000255" key="5">
    <source>
        <dbReference type="PROSITE-ProRule" id="PRU01379"/>
    </source>
</evidence>
<evidence type="ECO:0000256" key="6">
    <source>
        <dbReference type="SAM" id="MobiDB-lite"/>
    </source>
</evidence>
<evidence type="ECO:0000305" key="7"/>
<sequence>MHLLPVITAVALIYTPLASAVPSSSNPQFPAALLTESNSAALPTQEWHSPRLWTRLRNSIIETIWRVPSQQRHPSRIKSPASSRKAPASIRARYGDDVVLRFTIQSQSDIQALVEASNILFLDIWASTDEWVDIRLAKDVVPSLLGLLPSSLKAASVPVIHDLAQAVYESYPQPSSSTPNPHRAFSPSIRLSSEAQNIFFQDYQPLSVMTPWMRLLASMFSTHVSLISLGTSYEGRDITAFRIGTHPMNPDNPFGQRKTIIITGGSHAREWISVSTVNYVAYSLITGYGKSKAITKLIEEFDWVLVPTMNPDGYVYTWETDRLWRKNRQENNLQFCPGVDLDRTWGFEWDGTDSRSNPCSEDFAGDGPFGGTEAQRISQWARNQTMNNNVTFIGFLDLHSYSQQILYPYSYSCNNIPPTLENLEELAIGISRAIRRTDNEHYDVSSACQGSVNSGKKKQGPALKRMESAGGSALDWFYHDLHVRYAYQLKLRDKGSYGFLLPRSNIIPTGKEVYNAVLEFGKFLLGKEAPSVDWDAEFQVSDPSRPISPDNEYHDRDVEHEALQQLDDEDGEADSHWVLRTQRS</sequence>
<reference key="1">
    <citation type="journal article" date="2009" name="Genome Res.">
        <title>Comparative genomic analyses of the human fungal pathogens Coccidioides and their relatives.</title>
        <authorList>
            <person name="Sharpton T.J."/>
            <person name="Stajich J.E."/>
            <person name="Rounsley S.D."/>
            <person name="Gardner M.J."/>
            <person name="Wortman J.R."/>
            <person name="Jordar V.S."/>
            <person name="Maiti R."/>
            <person name="Kodira C.D."/>
            <person name="Neafsey D.E."/>
            <person name="Zeng Q."/>
            <person name="Hung C.-Y."/>
            <person name="McMahan C."/>
            <person name="Muszewska A."/>
            <person name="Grynberg M."/>
            <person name="Mandel M.A."/>
            <person name="Kellner E.M."/>
            <person name="Barker B.M."/>
            <person name="Galgiani J.N."/>
            <person name="Orbach M.J."/>
            <person name="Kirkland T.N."/>
            <person name="Cole G.T."/>
            <person name="Henn M.R."/>
            <person name="Birren B.W."/>
            <person name="Taylor J.W."/>
        </authorList>
    </citation>
    <scope>NUCLEOTIDE SEQUENCE [LARGE SCALE GENOMIC DNA]</scope>
    <source>
        <strain>UAMH 1704</strain>
    </source>
</reference>
<accession>C4JEE1</accession>
<keyword id="KW-0961">Cell wall biogenesis/degradation</keyword>
<keyword id="KW-1015">Disulfide bond</keyword>
<keyword id="KW-0325">Glycoprotein</keyword>
<keyword id="KW-0479">Metal-binding</keyword>
<keyword id="KW-1185">Reference proteome</keyword>
<keyword id="KW-0964">Secreted</keyword>
<keyword id="KW-0732">Signal</keyword>
<keyword id="KW-0926">Vacuole</keyword>
<keyword id="KW-0862">Zinc</keyword>
<name>ECM14_UNCRE</name>
<organism>
    <name type="scientific">Uncinocarpus reesii (strain UAMH 1704)</name>
    <dbReference type="NCBI Taxonomy" id="336963"/>
    <lineage>
        <taxon>Eukaryota</taxon>
        <taxon>Fungi</taxon>
        <taxon>Dikarya</taxon>
        <taxon>Ascomycota</taxon>
        <taxon>Pezizomycotina</taxon>
        <taxon>Eurotiomycetes</taxon>
        <taxon>Eurotiomycetidae</taxon>
        <taxon>Onygenales</taxon>
        <taxon>Onygenaceae</taxon>
        <taxon>Uncinocarpus</taxon>
    </lineage>
</organism>
<protein>
    <recommendedName>
        <fullName evidence="7">Inactive metallocarboxypeptidase ECM14</fullName>
    </recommendedName>
</protein>